<dbReference type="EMBL" id="AB044371">
    <property type="protein sequence ID" value="BAB18919.1"/>
    <property type="molecule type" value="mRNA"/>
</dbReference>
<dbReference type="RefSeq" id="NP_989524.1">
    <property type="nucleotide sequence ID" value="NM_204193.1"/>
</dbReference>
<dbReference type="SMR" id="Q9DED6"/>
<dbReference type="FunCoup" id="Q9DED6">
    <property type="interactions" value="122"/>
</dbReference>
<dbReference type="STRING" id="9031.ENSGALP00000072578"/>
<dbReference type="PaxDb" id="9031-ENSGALP00000008226"/>
<dbReference type="GeneID" id="374017"/>
<dbReference type="KEGG" id="gga:374017"/>
<dbReference type="CTD" id="56033"/>
<dbReference type="VEuPathDB" id="HostDB:geneid_374017"/>
<dbReference type="eggNOG" id="KOG0488">
    <property type="taxonomic scope" value="Eukaryota"/>
</dbReference>
<dbReference type="InParanoid" id="Q9DED6"/>
<dbReference type="OrthoDB" id="6159439at2759"/>
<dbReference type="PhylomeDB" id="Q9DED6"/>
<dbReference type="PRO" id="PR:Q9DED6"/>
<dbReference type="Proteomes" id="UP000000539">
    <property type="component" value="Chromosome 12"/>
</dbReference>
<dbReference type="Bgee" id="ENSGALG00000035557">
    <property type="expression patterns" value="Expressed in spleen and 1 other cell type or tissue"/>
</dbReference>
<dbReference type="GO" id="GO:0005634">
    <property type="term" value="C:nucleus"/>
    <property type="evidence" value="ECO:0000318"/>
    <property type="project" value="GO_Central"/>
</dbReference>
<dbReference type="GO" id="GO:0000981">
    <property type="term" value="F:DNA-binding transcription factor activity, RNA polymerase II-specific"/>
    <property type="evidence" value="ECO:0000318"/>
    <property type="project" value="GO_Central"/>
</dbReference>
<dbReference type="GO" id="GO:0000977">
    <property type="term" value="F:RNA polymerase II transcription regulatory region sequence-specific DNA binding"/>
    <property type="evidence" value="ECO:0000318"/>
    <property type="project" value="GO_Central"/>
</dbReference>
<dbReference type="GO" id="GO:0006357">
    <property type="term" value="P:regulation of transcription by RNA polymerase II"/>
    <property type="evidence" value="ECO:0000318"/>
    <property type="project" value="GO_Central"/>
</dbReference>
<dbReference type="CDD" id="cd00086">
    <property type="entry name" value="homeodomain"/>
    <property type="match status" value="1"/>
</dbReference>
<dbReference type="FunFam" id="1.10.10.60:FF:000103">
    <property type="entry name" value="Homeobox protein BarH-like 2"/>
    <property type="match status" value="1"/>
</dbReference>
<dbReference type="Gene3D" id="1.10.10.60">
    <property type="entry name" value="Homeodomain-like"/>
    <property type="match status" value="1"/>
</dbReference>
<dbReference type="InterPro" id="IPR001356">
    <property type="entry name" value="HD"/>
</dbReference>
<dbReference type="InterPro" id="IPR020479">
    <property type="entry name" value="HD_metazoa"/>
</dbReference>
<dbReference type="InterPro" id="IPR017970">
    <property type="entry name" value="Homeobox_CS"/>
</dbReference>
<dbReference type="InterPro" id="IPR050848">
    <property type="entry name" value="Homeobox_TF"/>
</dbReference>
<dbReference type="InterPro" id="IPR009057">
    <property type="entry name" value="Homeodomain-like_sf"/>
</dbReference>
<dbReference type="InterPro" id="IPR000047">
    <property type="entry name" value="HTH_motif"/>
</dbReference>
<dbReference type="PANTHER" id="PTHR24333:SF12">
    <property type="entry name" value="BARX HOMEOBOX 1"/>
    <property type="match status" value="1"/>
</dbReference>
<dbReference type="PANTHER" id="PTHR24333">
    <property type="entry name" value="HOMEO BOX HB9 LIKE A-RELATED"/>
    <property type="match status" value="1"/>
</dbReference>
<dbReference type="Pfam" id="PF00046">
    <property type="entry name" value="Homeodomain"/>
    <property type="match status" value="1"/>
</dbReference>
<dbReference type="PRINTS" id="PR00024">
    <property type="entry name" value="HOMEOBOX"/>
</dbReference>
<dbReference type="PRINTS" id="PR00031">
    <property type="entry name" value="HTHREPRESSR"/>
</dbReference>
<dbReference type="SMART" id="SM00389">
    <property type="entry name" value="HOX"/>
    <property type="match status" value="1"/>
</dbReference>
<dbReference type="SUPFAM" id="SSF46689">
    <property type="entry name" value="Homeodomain-like"/>
    <property type="match status" value="1"/>
</dbReference>
<dbReference type="PROSITE" id="PS00027">
    <property type="entry name" value="HOMEOBOX_1"/>
    <property type="match status" value="1"/>
</dbReference>
<dbReference type="PROSITE" id="PS50071">
    <property type="entry name" value="HOMEOBOX_2"/>
    <property type="match status" value="1"/>
</dbReference>
<protein>
    <recommendedName>
        <fullName>Homeobox protein BarH-like 1b</fullName>
    </recommendedName>
    <alternativeName>
        <fullName>Bar class homeoprotein Barx1b</fullName>
    </alternativeName>
</protein>
<organism>
    <name type="scientific">Gallus gallus</name>
    <name type="common">Chicken</name>
    <dbReference type="NCBI Taxonomy" id="9031"/>
    <lineage>
        <taxon>Eukaryota</taxon>
        <taxon>Metazoa</taxon>
        <taxon>Chordata</taxon>
        <taxon>Craniata</taxon>
        <taxon>Vertebrata</taxon>
        <taxon>Euteleostomi</taxon>
        <taxon>Archelosauria</taxon>
        <taxon>Archosauria</taxon>
        <taxon>Dinosauria</taxon>
        <taxon>Saurischia</taxon>
        <taxon>Theropoda</taxon>
        <taxon>Coelurosauria</taxon>
        <taxon>Aves</taxon>
        <taxon>Neognathae</taxon>
        <taxon>Galloanserae</taxon>
        <taxon>Galliformes</taxon>
        <taxon>Phasianidae</taxon>
        <taxon>Phasianinae</taxon>
        <taxon>Gallus</taxon>
    </lineage>
</organism>
<feature type="chain" id="PRO_0000048837" description="Homeobox protein BarH-like 1b">
    <location>
        <begin position="1"/>
        <end position="247"/>
    </location>
</feature>
<feature type="DNA-binding region" description="Homeobox" evidence="1">
    <location>
        <begin position="135"/>
        <end position="194"/>
    </location>
</feature>
<feature type="region of interest" description="Disordered" evidence="2">
    <location>
        <begin position="118"/>
        <end position="138"/>
    </location>
</feature>
<feature type="region of interest" description="Disordered" evidence="2">
    <location>
        <begin position="197"/>
        <end position="247"/>
    </location>
</feature>
<feature type="compositionally biased region" description="Basic and acidic residues" evidence="2">
    <location>
        <begin position="223"/>
        <end position="234"/>
    </location>
</feature>
<comment type="function">
    <text>Transcription factor which is involved with the serum response factor (SRF) in the smooth muscle cell-specific transcription of the beta-tropomyosin gene in the upper digestive organs and their attached arteries.</text>
</comment>
<comment type="subunit">
    <text>Interacts with serum response factor (SRF).</text>
</comment>
<comment type="subcellular location">
    <subcellularLocation>
        <location evidence="1">Nucleus</location>
    </subcellularLocation>
</comment>
<comment type="tissue specificity">
    <text>Expressed in smooth muscle cells of the upper digestive organs and their attached arteries and to craniofacial structures.</text>
</comment>
<comment type="similarity">
    <text evidence="3">Belongs to the BAR homeobox family.</text>
</comment>
<proteinExistence type="evidence at transcript level"/>
<name>BAX1B_CHICK</name>
<gene>
    <name type="primary">BARX1B</name>
</gene>
<keyword id="KW-0238">DNA-binding</keyword>
<keyword id="KW-0371">Homeobox</keyword>
<keyword id="KW-0539">Nucleus</keyword>
<keyword id="KW-1185">Reference proteome</keyword>
<keyword id="KW-0804">Transcription</keyword>
<keyword id="KW-0805">Transcription regulation</keyword>
<accession>Q9DED6</accession>
<reference key="1">
    <citation type="journal article" date="2001" name="J. Biol. Chem.">
        <title>Transcriptional activation of beta-tropomyosin mediated by serum response factor and a novel Barx homologue, Barx1b, in smooth muscle cells.</title>
        <authorList>
            <person name="Nakamura M."/>
            <person name="Nishida W."/>
            <person name="Mori S."/>
            <person name="Hiwada K."/>
            <person name="Hayashi K."/>
            <person name="Sobue K."/>
        </authorList>
    </citation>
    <scope>NUCLEOTIDE SEQUENCE [MRNA]</scope>
</reference>
<evidence type="ECO:0000255" key="1">
    <source>
        <dbReference type="PROSITE-ProRule" id="PRU00108"/>
    </source>
</evidence>
<evidence type="ECO:0000256" key="2">
    <source>
        <dbReference type="SAM" id="MobiDB-lite"/>
    </source>
</evidence>
<evidence type="ECO:0000305" key="3"/>
<sequence>MQHPLELGAAHYFPAEAFPDHRSHRYRSFMIEEILTDPPDAKGTAPPGELLKFGVQALLSARPYHSHLAVLKAEPAAVFKFPLAPLGCSGLGSALLAAGSGLQGGSASPHLPLELHLRGKLEPGGPETGSKAKKGRRSRTVFTELQLMGLEKRFEKQKYLSTPDRIDLAESLGLSQLQVKTWYQNRRMKWKKIVLQGGGLESPTKPKGRPKKNSIPSSEQLSEQERARDAEKPPESLGSPAEVSQEE</sequence>